<sequence length="147" mass="16850">MNNILVINGPNLNLLGKREPDIYGNITLENINQKIKLHFKNEDLKIDFFQSNEEGKIIDKIIESEKKYNAIVINPAAYSHYSIAILDAMRSINIPVVEVHLSNIYKREEYRKKSVTAEASLGVISGFGYYGYIMAIEFILNNLVREK</sequence>
<name>AROQ_CLOBJ</name>
<feature type="chain" id="PRO_1000203669" description="3-dehydroquinate dehydratase">
    <location>
        <begin position="1"/>
        <end position="147"/>
    </location>
</feature>
<feature type="active site" description="Proton acceptor" evidence="1">
    <location>
        <position position="23"/>
    </location>
</feature>
<feature type="active site" description="Proton donor" evidence="1">
    <location>
        <position position="100"/>
    </location>
</feature>
<feature type="binding site" evidence="1">
    <location>
        <position position="74"/>
    </location>
    <ligand>
        <name>substrate</name>
    </ligand>
</feature>
<feature type="binding site" evidence="1">
    <location>
        <position position="80"/>
    </location>
    <ligand>
        <name>substrate</name>
    </ligand>
</feature>
<feature type="binding site" evidence="1">
    <location>
        <position position="87"/>
    </location>
    <ligand>
        <name>substrate</name>
    </ligand>
</feature>
<feature type="binding site" evidence="1">
    <location>
        <begin position="101"/>
        <end position="102"/>
    </location>
    <ligand>
        <name>substrate</name>
    </ligand>
</feature>
<feature type="binding site" evidence="1">
    <location>
        <position position="111"/>
    </location>
    <ligand>
        <name>substrate</name>
    </ligand>
</feature>
<feature type="site" description="Transition state stabilizer" evidence="1">
    <location>
        <position position="18"/>
    </location>
</feature>
<organism>
    <name type="scientific">Clostridium botulinum (strain Kyoto / Type A2)</name>
    <dbReference type="NCBI Taxonomy" id="536232"/>
    <lineage>
        <taxon>Bacteria</taxon>
        <taxon>Bacillati</taxon>
        <taxon>Bacillota</taxon>
        <taxon>Clostridia</taxon>
        <taxon>Eubacteriales</taxon>
        <taxon>Clostridiaceae</taxon>
        <taxon>Clostridium</taxon>
    </lineage>
</organism>
<gene>
    <name evidence="1" type="primary">aroQ</name>
    <name type="ordered locus">CLM_2115</name>
</gene>
<dbReference type="EC" id="4.2.1.10" evidence="1"/>
<dbReference type="EMBL" id="CP001581">
    <property type="protein sequence ID" value="ACO84771.1"/>
    <property type="molecule type" value="Genomic_DNA"/>
</dbReference>
<dbReference type="RefSeq" id="WP_003359085.1">
    <property type="nucleotide sequence ID" value="NC_012563.1"/>
</dbReference>
<dbReference type="SMR" id="C1FPC5"/>
<dbReference type="KEGG" id="cby:CLM_2115"/>
<dbReference type="eggNOG" id="COG0757">
    <property type="taxonomic scope" value="Bacteria"/>
</dbReference>
<dbReference type="HOGENOM" id="CLU_090968_2_0_9"/>
<dbReference type="UniPathway" id="UPA00053">
    <property type="reaction ID" value="UER00086"/>
</dbReference>
<dbReference type="Proteomes" id="UP000001374">
    <property type="component" value="Chromosome"/>
</dbReference>
<dbReference type="GO" id="GO:0003855">
    <property type="term" value="F:3-dehydroquinate dehydratase activity"/>
    <property type="evidence" value="ECO:0007669"/>
    <property type="project" value="UniProtKB-UniRule"/>
</dbReference>
<dbReference type="GO" id="GO:0008652">
    <property type="term" value="P:amino acid biosynthetic process"/>
    <property type="evidence" value="ECO:0007669"/>
    <property type="project" value="UniProtKB-KW"/>
</dbReference>
<dbReference type="GO" id="GO:0009073">
    <property type="term" value="P:aromatic amino acid family biosynthetic process"/>
    <property type="evidence" value="ECO:0007669"/>
    <property type="project" value="UniProtKB-KW"/>
</dbReference>
<dbReference type="GO" id="GO:0009423">
    <property type="term" value="P:chorismate biosynthetic process"/>
    <property type="evidence" value="ECO:0007669"/>
    <property type="project" value="UniProtKB-UniRule"/>
</dbReference>
<dbReference type="GO" id="GO:0019631">
    <property type="term" value="P:quinate catabolic process"/>
    <property type="evidence" value="ECO:0007669"/>
    <property type="project" value="TreeGrafter"/>
</dbReference>
<dbReference type="CDD" id="cd00466">
    <property type="entry name" value="DHQase_II"/>
    <property type="match status" value="1"/>
</dbReference>
<dbReference type="Gene3D" id="3.40.50.9100">
    <property type="entry name" value="Dehydroquinase, class II"/>
    <property type="match status" value="1"/>
</dbReference>
<dbReference type="HAMAP" id="MF_00169">
    <property type="entry name" value="AroQ"/>
    <property type="match status" value="1"/>
</dbReference>
<dbReference type="InterPro" id="IPR001874">
    <property type="entry name" value="DHquinase_II"/>
</dbReference>
<dbReference type="InterPro" id="IPR018509">
    <property type="entry name" value="DHquinase_II_CS"/>
</dbReference>
<dbReference type="InterPro" id="IPR036441">
    <property type="entry name" value="DHquinase_II_sf"/>
</dbReference>
<dbReference type="NCBIfam" id="TIGR01088">
    <property type="entry name" value="aroQ"/>
    <property type="match status" value="1"/>
</dbReference>
<dbReference type="NCBIfam" id="NF003805">
    <property type="entry name" value="PRK05395.1-2"/>
    <property type="match status" value="1"/>
</dbReference>
<dbReference type="NCBIfam" id="NF003806">
    <property type="entry name" value="PRK05395.1-3"/>
    <property type="match status" value="1"/>
</dbReference>
<dbReference type="NCBIfam" id="NF003807">
    <property type="entry name" value="PRK05395.1-4"/>
    <property type="match status" value="1"/>
</dbReference>
<dbReference type="PANTHER" id="PTHR21272">
    <property type="entry name" value="CATABOLIC 3-DEHYDROQUINASE"/>
    <property type="match status" value="1"/>
</dbReference>
<dbReference type="PANTHER" id="PTHR21272:SF3">
    <property type="entry name" value="CATABOLIC 3-DEHYDROQUINASE"/>
    <property type="match status" value="1"/>
</dbReference>
<dbReference type="Pfam" id="PF01220">
    <property type="entry name" value="DHquinase_II"/>
    <property type="match status" value="1"/>
</dbReference>
<dbReference type="PIRSF" id="PIRSF001399">
    <property type="entry name" value="DHquinase_II"/>
    <property type="match status" value="1"/>
</dbReference>
<dbReference type="SUPFAM" id="SSF52304">
    <property type="entry name" value="Type II 3-dehydroquinate dehydratase"/>
    <property type="match status" value="1"/>
</dbReference>
<dbReference type="PROSITE" id="PS01029">
    <property type="entry name" value="DEHYDROQUINASE_II"/>
    <property type="match status" value="1"/>
</dbReference>
<comment type="function">
    <text evidence="1">Catalyzes a trans-dehydration via an enolate intermediate.</text>
</comment>
<comment type="catalytic activity">
    <reaction evidence="1">
        <text>3-dehydroquinate = 3-dehydroshikimate + H2O</text>
        <dbReference type="Rhea" id="RHEA:21096"/>
        <dbReference type="ChEBI" id="CHEBI:15377"/>
        <dbReference type="ChEBI" id="CHEBI:16630"/>
        <dbReference type="ChEBI" id="CHEBI:32364"/>
        <dbReference type="EC" id="4.2.1.10"/>
    </reaction>
</comment>
<comment type="pathway">
    <text evidence="1">Metabolic intermediate biosynthesis; chorismate biosynthesis; chorismate from D-erythrose 4-phosphate and phosphoenolpyruvate: step 3/7.</text>
</comment>
<comment type="subunit">
    <text evidence="1">Homododecamer.</text>
</comment>
<comment type="similarity">
    <text evidence="1">Belongs to the type-II 3-dehydroquinase family.</text>
</comment>
<evidence type="ECO:0000255" key="1">
    <source>
        <dbReference type="HAMAP-Rule" id="MF_00169"/>
    </source>
</evidence>
<keyword id="KW-0028">Amino-acid biosynthesis</keyword>
<keyword id="KW-0057">Aromatic amino acid biosynthesis</keyword>
<keyword id="KW-0456">Lyase</keyword>
<accession>C1FPC5</accession>
<protein>
    <recommendedName>
        <fullName evidence="1">3-dehydroquinate dehydratase</fullName>
        <shortName evidence="1">3-dehydroquinase</shortName>
        <ecNumber evidence="1">4.2.1.10</ecNumber>
    </recommendedName>
    <alternativeName>
        <fullName evidence="1">Type II DHQase</fullName>
    </alternativeName>
</protein>
<reference key="1">
    <citation type="submission" date="2008-10" db="EMBL/GenBank/DDBJ databases">
        <title>Genome sequence of Clostridium botulinum A2 Kyoto.</title>
        <authorList>
            <person name="Shrivastava S."/>
            <person name="Brinkac L.M."/>
            <person name="Brown J.L."/>
            <person name="Bruce D."/>
            <person name="Detter C.C."/>
            <person name="Johnson E.A."/>
            <person name="Munk C.A."/>
            <person name="Smith L.A."/>
            <person name="Smith T.J."/>
            <person name="Sutton G."/>
            <person name="Brettin T.S."/>
        </authorList>
    </citation>
    <scope>NUCLEOTIDE SEQUENCE [LARGE SCALE GENOMIC DNA]</scope>
    <source>
        <strain>Kyoto / Type A2</strain>
    </source>
</reference>
<proteinExistence type="inferred from homology"/>